<organism>
    <name type="scientific">Streptococcus pyogenes serotype M3 (strain ATCC BAA-595 / MGAS315)</name>
    <dbReference type="NCBI Taxonomy" id="198466"/>
    <lineage>
        <taxon>Bacteria</taxon>
        <taxon>Bacillati</taxon>
        <taxon>Bacillota</taxon>
        <taxon>Bacilli</taxon>
        <taxon>Lactobacillales</taxon>
        <taxon>Streptococcaceae</taxon>
        <taxon>Streptococcus</taxon>
    </lineage>
</organism>
<gene>
    <name evidence="1" type="primary">coaD</name>
    <name type="synonym">kdtB</name>
    <name type="ordered locus">SpyM3_1188</name>
</gene>
<proteinExistence type="inferred from homology"/>
<accession>P0DA42</accession>
<accession>P58104</accession>
<accession>P63822</accession>
<dbReference type="EC" id="2.7.7.3" evidence="1"/>
<dbReference type="EMBL" id="AE014074">
    <property type="protein sequence ID" value="AAM79795.1"/>
    <property type="molecule type" value="Genomic_DNA"/>
</dbReference>
<dbReference type="RefSeq" id="WP_002983821.1">
    <property type="nucleotide sequence ID" value="NC_004070.1"/>
</dbReference>
<dbReference type="SMR" id="P0DA42"/>
<dbReference type="GeneID" id="69900575"/>
<dbReference type="KEGG" id="spg:SpyM3_1188"/>
<dbReference type="HOGENOM" id="CLU_100149_0_1_9"/>
<dbReference type="UniPathway" id="UPA00241">
    <property type="reaction ID" value="UER00355"/>
</dbReference>
<dbReference type="Proteomes" id="UP000000564">
    <property type="component" value="Chromosome"/>
</dbReference>
<dbReference type="GO" id="GO:0005737">
    <property type="term" value="C:cytoplasm"/>
    <property type="evidence" value="ECO:0007669"/>
    <property type="project" value="UniProtKB-SubCell"/>
</dbReference>
<dbReference type="GO" id="GO:0005524">
    <property type="term" value="F:ATP binding"/>
    <property type="evidence" value="ECO:0007669"/>
    <property type="project" value="UniProtKB-KW"/>
</dbReference>
<dbReference type="GO" id="GO:0004595">
    <property type="term" value="F:pantetheine-phosphate adenylyltransferase activity"/>
    <property type="evidence" value="ECO:0007669"/>
    <property type="project" value="UniProtKB-UniRule"/>
</dbReference>
<dbReference type="GO" id="GO:0015937">
    <property type="term" value="P:coenzyme A biosynthetic process"/>
    <property type="evidence" value="ECO:0007669"/>
    <property type="project" value="UniProtKB-UniRule"/>
</dbReference>
<dbReference type="CDD" id="cd02163">
    <property type="entry name" value="PPAT"/>
    <property type="match status" value="1"/>
</dbReference>
<dbReference type="Gene3D" id="3.40.50.620">
    <property type="entry name" value="HUPs"/>
    <property type="match status" value="1"/>
</dbReference>
<dbReference type="HAMAP" id="MF_00151">
    <property type="entry name" value="PPAT_bact"/>
    <property type="match status" value="1"/>
</dbReference>
<dbReference type="InterPro" id="IPR004821">
    <property type="entry name" value="Cyt_trans-like"/>
</dbReference>
<dbReference type="InterPro" id="IPR001980">
    <property type="entry name" value="PPAT"/>
</dbReference>
<dbReference type="InterPro" id="IPR014729">
    <property type="entry name" value="Rossmann-like_a/b/a_fold"/>
</dbReference>
<dbReference type="NCBIfam" id="TIGR01510">
    <property type="entry name" value="coaD_prev_kdtB"/>
    <property type="match status" value="1"/>
</dbReference>
<dbReference type="NCBIfam" id="TIGR00125">
    <property type="entry name" value="cyt_tran_rel"/>
    <property type="match status" value="1"/>
</dbReference>
<dbReference type="PANTHER" id="PTHR21342">
    <property type="entry name" value="PHOSPHOPANTETHEINE ADENYLYLTRANSFERASE"/>
    <property type="match status" value="1"/>
</dbReference>
<dbReference type="PANTHER" id="PTHR21342:SF1">
    <property type="entry name" value="PHOSPHOPANTETHEINE ADENYLYLTRANSFERASE"/>
    <property type="match status" value="1"/>
</dbReference>
<dbReference type="Pfam" id="PF01467">
    <property type="entry name" value="CTP_transf_like"/>
    <property type="match status" value="1"/>
</dbReference>
<dbReference type="PRINTS" id="PR01020">
    <property type="entry name" value="LPSBIOSNTHSS"/>
</dbReference>
<dbReference type="SUPFAM" id="SSF52374">
    <property type="entry name" value="Nucleotidylyl transferase"/>
    <property type="match status" value="1"/>
</dbReference>
<reference key="1">
    <citation type="journal article" date="2002" name="Proc. Natl. Acad. Sci. U.S.A.">
        <title>Genome sequence of a serotype M3 strain of group A Streptococcus: phage-encoded toxins, the high-virulence phenotype, and clone emergence.</title>
        <authorList>
            <person name="Beres S.B."/>
            <person name="Sylva G.L."/>
            <person name="Barbian K.D."/>
            <person name="Lei B."/>
            <person name="Hoff J.S."/>
            <person name="Mammarella N.D."/>
            <person name="Liu M.-Y."/>
            <person name="Smoot J.C."/>
            <person name="Porcella S.F."/>
            <person name="Parkins L.D."/>
            <person name="Campbell D.S."/>
            <person name="Smith T.M."/>
            <person name="McCormick J.K."/>
            <person name="Leung D.Y.M."/>
            <person name="Schlievert P.M."/>
            <person name="Musser J.M."/>
        </authorList>
    </citation>
    <scope>NUCLEOTIDE SEQUENCE [LARGE SCALE GENOMIC DNA]</scope>
    <source>
        <strain>ATCC BAA-595 / MGAS315</strain>
    </source>
</reference>
<name>COAD_STRP3</name>
<protein>
    <recommendedName>
        <fullName evidence="1">Phosphopantetheine adenylyltransferase</fullName>
        <ecNumber evidence="1">2.7.7.3</ecNumber>
    </recommendedName>
    <alternativeName>
        <fullName evidence="1">Dephospho-CoA pyrophosphorylase</fullName>
    </alternativeName>
    <alternativeName>
        <fullName evidence="1">Pantetheine-phosphate adenylyltransferase</fullName>
        <shortName evidence="1">PPAT</shortName>
    </alternativeName>
</protein>
<feature type="chain" id="PRO_0000156287" description="Phosphopantetheine adenylyltransferase">
    <location>
        <begin position="1"/>
        <end position="163"/>
    </location>
</feature>
<feature type="binding site" evidence="1">
    <location>
        <begin position="11"/>
        <end position="12"/>
    </location>
    <ligand>
        <name>ATP</name>
        <dbReference type="ChEBI" id="CHEBI:30616"/>
    </ligand>
</feature>
<feature type="binding site" evidence="1">
    <location>
        <position position="11"/>
    </location>
    <ligand>
        <name>substrate</name>
    </ligand>
</feature>
<feature type="binding site" evidence="1">
    <location>
        <position position="19"/>
    </location>
    <ligand>
        <name>ATP</name>
        <dbReference type="ChEBI" id="CHEBI:30616"/>
    </ligand>
</feature>
<feature type="binding site" evidence="1">
    <location>
        <position position="43"/>
    </location>
    <ligand>
        <name>substrate</name>
    </ligand>
</feature>
<feature type="binding site" evidence="1">
    <location>
        <position position="76"/>
    </location>
    <ligand>
        <name>substrate</name>
    </ligand>
</feature>
<feature type="binding site" evidence="1">
    <location>
        <position position="90"/>
    </location>
    <ligand>
        <name>substrate</name>
    </ligand>
</feature>
<feature type="binding site" evidence="1">
    <location>
        <begin position="91"/>
        <end position="93"/>
    </location>
    <ligand>
        <name>ATP</name>
        <dbReference type="ChEBI" id="CHEBI:30616"/>
    </ligand>
</feature>
<feature type="binding site" evidence="1">
    <location>
        <position position="101"/>
    </location>
    <ligand>
        <name>ATP</name>
        <dbReference type="ChEBI" id="CHEBI:30616"/>
    </ligand>
</feature>
<feature type="binding site" evidence="1">
    <location>
        <begin position="126"/>
        <end position="132"/>
    </location>
    <ligand>
        <name>ATP</name>
        <dbReference type="ChEBI" id="CHEBI:30616"/>
    </ligand>
</feature>
<feature type="site" description="Transition state stabilizer" evidence="1">
    <location>
        <position position="19"/>
    </location>
</feature>
<sequence length="163" mass="18629">MLTKIGLYTGSFDPVTNGHLDIVKRASGLFDQIYVGIFDNPTKKSYFKLEVRKAMLTQALADFTNVIVVTSHERLAIDVAKELRVTHLIRGLRNATDFEYEENLEYFNHLLAPNIETVYLISRNKWQALSSSRVRELIHFQSSLEGLVPQSVIAQVEKMNEKT</sequence>
<comment type="function">
    <text evidence="1">Reversibly transfers an adenylyl group from ATP to 4'-phosphopantetheine, yielding dephospho-CoA (dPCoA) and pyrophosphate.</text>
</comment>
<comment type="catalytic activity">
    <reaction evidence="1">
        <text>(R)-4'-phosphopantetheine + ATP + H(+) = 3'-dephospho-CoA + diphosphate</text>
        <dbReference type="Rhea" id="RHEA:19801"/>
        <dbReference type="ChEBI" id="CHEBI:15378"/>
        <dbReference type="ChEBI" id="CHEBI:30616"/>
        <dbReference type="ChEBI" id="CHEBI:33019"/>
        <dbReference type="ChEBI" id="CHEBI:57328"/>
        <dbReference type="ChEBI" id="CHEBI:61723"/>
        <dbReference type="EC" id="2.7.7.3"/>
    </reaction>
</comment>
<comment type="cofactor">
    <cofactor evidence="1">
        <name>Mg(2+)</name>
        <dbReference type="ChEBI" id="CHEBI:18420"/>
    </cofactor>
</comment>
<comment type="pathway">
    <text evidence="1">Cofactor biosynthesis; coenzyme A biosynthesis; CoA from (R)-pantothenate: step 4/5.</text>
</comment>
<comment type="subunit">
    <text evidence="1">Homohexamer.</text>
</comment>
<comment type="subcellular location">
    <subcellularLocation>
        <location evidence="1">Cytoplasm</location>
    </subcellularLocation>
</comment>
<comment type="similarity">
    <text evidence="1">Belongs to the bacterial CoaD family.</text>
</comment>
<keyword id="KW-0067">ATP-binding</keyword>
<keyword id="KW-0173">Coenzyme A biosynthesis</keyword>
<keyword id="KW-0963">Cytoplasm</keyword>
<keyword id="KW-0460">Magnesium</keyword>
<keyword id="KW-0547">Nucleotide-binding</keyword>
<keyword id="KW-0548">Nucleotidyltransferase</keyword>
<keyword id="KW-0808">Transferase</keyword>
<evidence type="ECO:0000255" key="1">
    <source>
        <dbReference type="HAMAP-Rule" id="MF_00151"/>
    </source>
</evidence>